<sequence>MNKPIPNSLRTLPDDRGRFGEFGGRFVAETLMPLILELEAAYEAAKDDPDFMREFQYYLQHYVGRPSPLWFAERLTKELGGAKVYFKRDELNHTGAHKINNCIGQILLAKRMGKTRIIAETGAGQHGVATATVAALFGLPCIVYMGATDVERQQPNVFRMKLLGAEVRPVTSGASTLKDAMNEALRDWVANVRDTFYIIGTAAGPHPYPAMVRDFQSVIGVEARAQMMEAEGRLPDVAIAAIGGGSNAIGLFHAFLDEQVKLIGVEAAGRGLDSGEHAASLSRGRPGVLHGNRTYLLQDDDGQILEAHSISAGLDYPGIGPEHSYLHDIGRVEYVSATDDEALAAFQLCCRTEGIIPALEPSHALAHVAKIAPGMDKESIILMNLCGRGDKDIFTVARHLGEQI</sequence>
<feature type="chain" id="PRO_1000018318" description="Tryptophan synthase beta chain">
    <location>
        <begin position="1"/>
        <end position="404"/>
    </location>
</feature>
<feature type="modified residue" description="N6-(pyridoxal phosphate)lysine" evidence="1">
    <location>
        <position position="98"/>
    </location>
</feature>
<reference key="1">
    <citation type="submission" date="2007-05" db="EMBL/GenBank/DDBJ databases">
        <title>Complete sequence of chromosome of Acidiphilium cryptum JF-5.</title>
        <authorList>
            <consortium name="US DOE Joint Genome Institute"/>
            <person name="Copeland A."/>
            <person name="Lucas S."/>
            <person name="Lapidus A."/>
            <person name="Barry K."/>
            <person name="Detter J.C."/>
            <person name="Glavina del Rio T."/>
            <person name="Hammon N."/>
            <person name="Israni S."/>
            <person name="Dalin E."/>
            <person name="Tice H."/>
            <person name="Pitluck S."/>
            <person name="Sims D."/>
            <person name="Brettin T."/>
            <person name="Bruce D."/>
            <person name="Han C."/>
            <person name="Schmutz J."/>
            <person name="Larimer F."/>
            <person name="Land M."/>
            <person name="Hauser L."/>
            <person name="Kyrpides N."/>
            <person name="Kim E."/>
            <person name="Magnuson T."/>
            <person name="Richardson P."/>
        </authorList>
    </citation>
    <scope>NUCLEOTIDE SEQUENCE [LARGE SCALE GENOMIC DNA]</scope>
    <source>
        <strain>JF-5</strain>
    </source>
</reference>
<dbReference type="EC" id="4.2.1.20" evidence="1"/>
<dbReference type="EMBL" id="CP000697">
    <property type="protein sequence ID" value="ABQ30539.1"/>
    <property type="molecule type" value="Genomic_DNA"/>
</dbReference>
<dbReference type="RefSeq" id="WP_007423023.1">
    <property type="nucleotide sequence ID" value="NC_009484.1"/>
</dbReference>
<dbReference type="SMR" id="A5FY57"/>
<dbReference type="STRING" id="349163.Acry_1328"/>
<dbReference type="KEGG" id="acr:Acry_1328"/>
<dbReference type="eggNOG" id="COG0133">
    <property type="taxonomic scope" value="Bacteria"/>
</dbReference>
<dbReference type="HOGENOM" id="CLU_016734_3_1_5"/>
<dbReference type="UniPathway" id="UPA00035">
    <property type="reaction ID" value="UER00044"/>
</dbReference>
<dbReference type="Proteomes" id="UP000000245">
    <property type="component" value="Chromosome"/>
</dbReference>
<dbReference type="GO" id="GO:0005737">
    <property type="term" value="C:cytoplasm"/>
    <property type="evidence" value="ECO:0007669"/>
    <property type="project" value="TreeGrafter"/>
</dbReference>
<dbReference type="GO" id="GO:0004834">
    <property type="term" value="F:tryptophan synthase activity"/>
    <property type="evidence" value="ECO:0007669"/>
    <property type="project" value="UniProtKB-UniRule"/>
</dbReference>
<dbReference type="CDD" id="cd06446">
    <property type="entry name" value="Trp-synth_B"/>
    <property type="match status" value="1"/>
</dbReference>
<dbReference type="FunFam" id="3.40.50.1100:FF:000001">
    <property type="entry name" value="Tryptophan synthase beta chain"/>
    <property type="match status" value="1"/>
</dbReference>
<dbReference type="FunFam" id="3.40.50.1100:FF:000004">
    <property type="entry name" value="Tryptophan synthase beta chain"/>
    <property type="match status" value="1"/>
</dbReference>
<dbReference type="Gene3D" id="3.40.50.1100">
    <property type="match status" value="2"/>
</dbReference>
<dbReference type="HAMAP" id="MF_00133">
    <property type="entry name" value="Trp_synth_beta"/>
    <property type="match status" value="1"/>
</dbReference>
<dbReference type="InterPro" id="IPR006653">
    <property type="entry name" value="Trp_synth_b_CS"/>
</dbReference>
<dbReference type="InterPro" id="IPR006654">
    <property type="entry name" value="Trp_synth_beta"/>
</dbReference>
<dbReference type="InterPro" id="IPR023026">
    <property type="entry name" value="Trp_synth_beta/beta-like"/>
</dbReference>
<dbReference type="InterPro" id="IPR001926">
    <property type="entry name" value="TrpB-like_PALP"/>
</dbReference>
<dbReference type="InterPro" id="IPR036052">
    <property type="entry name" value="TrpB-like_PALP_sf"/>
</dbReference>
<dbReference type="NCBIfam" id="TIGR00263">
    <property type="entry name" value="trpB"/>
    <property type="match status" value="1"/>
</dbReference>
<dbReference type="PANTHER" id="PTHR48077:SF3">
    <property type="entry name" value="TRYPTOPHAN SYNTHASE"/>
    <property type="match status" value="1"/>
</dbReference>
<dbReference type="PANTHER" id="PTHR48077">
    <property type="entry name" value="TRYPTOPHAN SYNTHASE-RELATED"/>
    <property type="match status" value="1"/>
</dbReference>
<dbReference type="Pfam" id="PF00291">
    <property type="entry name" value="PALP"/>
    <property type="match status" value="1"/>
</dbReference>
<dbReference type="PIRSF" id="PIRSF001413">
    <property type="entry name" value="Trp_syn_beta"/>
    <property type="match status" value="1"/>
</dbReference>
<dbReference type="SUPFAM" id="SSF53686">
    <property type="entry name" value="Tryptophan synthase beta subunit-like PLP-dependent enzymes"/>
    <property type="match status" value="1"/>
</dbReference>
<dbReference type="PROSITE" id="PS00168">
    <property type="entry name" value="TRP_SYNTHASE_BETA"/>
    <property type="match status" value="1"/>
</dbReference>
<comment type="function">
    <text evidence="1">The beta subunit is responsible for the synthesis of L-tryptophan from indole and L-serine.</text>
</comment>
<comment type="catalytic activity">
    <reaction evidence="1">
        <text>(1S,2R)-1-C-(indol-3-yl)glycerol 3-phosphate + L-serine = D-glyceraldehyde 3-phosphate + L-tryptophan + H2O</text>
        <dbReference type="Rhea" id="RHEA:10532"/>
        <dbReference type="ChEBI" id="CHEBI:15377"/>
        <dbReference type="ChEBI" id="CHEBI:33384"/>
        <dbReference type="ChEBI" id="CHEBI:57912"/>
        <dbReference type="ChEBI" id="CHEBI:58866"/>
        <dbReference type="ChEBI" id="CHEBI:59776"/>
        <dbReference type="EC" id="4.2.1.20"/>
    </reaction>
</comment>
<comment type="cofactor">
    <cofactor evidence="1">
        <name>pyridoxal 5'-phosphate</name>
        <dbReference type="ChEBI" id="CHEBI:597326"/>
    </cofactor>
</comment>
<comment type="pathway">
    <text evidence="1">Amino-acid biosynthesis; L-tryptophan biosynthesis; L-tryptophan from chorismate: step 5/5.</text>
</comment>
<comment type="subunit">
    <text evidence="1">Tetramer of two alpha and two beta chains.</text>
</comment>
<comment type="similarity">
    <text evidence="1">Belongs to the TrpB family.</text>
</comment>
<proteinExistence type="inferred from homology"/>
<protein>
    <recommendedName>
        <fullName evidence="1">Tryptophan synthase beta chain</fullName>
        <ecNumber evidence="1">4.2.1.20</ecNumber>
    </recommendedName>
</protein>
<organism>
    <name type="scientific">Acidiphilium cryptum (strain JF-5)</name>
    <dbReference type="NCBI Taxonomy" id="349163"/>
    <lineage>
        <taxon>Bacteria</taxon>
        <taxon>Pseudomonadati</taxon>
        <taxon>Pseudomonadota</taxon>
        <taxon>Alphaproteobacteria</taxon>
        <taxon>Acetobacterales</taxon>
        <taxon>Acidocellaceae</taxon>
        <taxon>Acidiphilium</taxon>
    </lineage>
</organism>
<accession>A5FY57</accession>
<gene>
    <name evidence="1" type="primary">trpB</name>
    <name type="ordered locus">Acry_1328</name>
</gene>
<name>TRPB_ACICJ</name>
<evidence type="ECO:0000255" key="1">
    <source>
        <dbReference type="HAMAP-Rule" id="MF_00133"/>
    </source>
</evidence>
<keyword id="KW-0028">Amino-acid biosynthesis</keyword>
<keyword id="KW-0057">Aromatic amino acid biosynthesis</keyword>
<keyword id="KW-0456">Lyase</keyword>
<keyword id="KW-0663">Pyridoxal phosphate</keyword>
<keyword id="KW-1185">Reference proteome</keyword>
<keyword id="KW-0822">Tryptophan biosynthesis</keyword>